<protein>
    <recommendedName>
        <fullName>Delta(1)-pyrroline-2-carboxylate reductase</fullName>
        <shortName>Pyr2C reductase</shortName>
        <ecNumber evidence="1">1.5.1.49</ecNumber>
    </recommendedName>
    <alternativeName>
        <fullName evidence="2">Proline ketimine reductase</fullName>
    </alternativeName>
</protein>
<feature type="chain" id="PRO_0000432297" description="Delta(1)-pyrroline-2-carboxylate reductase">
    <location>
        <begin position="1"/>
        <end position="316"/>
    </location>
</feature>
<accession>A1B196</accession>
<gene>
    <name evidence="4" type="ordered locus">Pden_1185</name>
</gene>
<comment type="function">
    <text evidence="1">Catalyzes the reduction of Delta(1)-pyrroline-2-carboxylate (Pyr2C) to L-proline, using preferentially NADPH over NADH as the electron donor. Is likely involved in a degradation pathway that converts trans-3-hydroxy-L-proline (t3LHyp) to L-proline, which would allow P.denitrificans to grow on t3LHyp as a sole carbon source.</text>
</comment>
<comment type="catalytic activity">
    <reaction evidence="1">
        <text>L-proline + NAD(+) = 1-pyrroline-2-carboxylate + NADH + H(+)</text>
        <dbReference type="Rhea" id="RHEA:20321"/>
        <dbReference type="ChEBI" id="CHEBI:15378"/>
        <dbReference type="ChEBI" id="CHEBI:39785"/>
        <dbReference type="ChEBI" id="CHEBI:57540"/>
        <dbReference type="ChEBI" id="CHEBI:57945"/>
        <dbReference type="ChEBI" id="CHEBI:60039"/>
        <dbReference type="EC" id="1.5.1.49"/>
    </reaction>
</comment>
<comment type="catalytic activity">
    <reaction evidence="1">
        <text>L-proline + NADP(+) = 1-pyrroline-2-carboxylate + NADPH + H(+)</text>
        <dbReference type="Rhea" id="RHEA:20317"/>
        <dbReference type="ChEBI" id="CHEBI:15378"/>
        <dbReference type="ChEBI" id="CHEBI:39785"/>
        <dbReference type="ChEBI" id="CHEBI:57783"/>
        <dbReference type="ChEBI" id="CHEBI:58349"/>
        <dbReference type="ChEBI" id="CHEBI:60039"/>
        <dbReference type="EC" id="1.5.1.49"/>
    </reaction>
</comment>
<comment type="biophysicochemical properties">
    <kinetics>
        <KM evidence="1">3.1 mM for Delta(1)-pyrroline-2-carboxylate (using NADPH as cosubstrate)</KM>
        <KM evidence="1">16 mM for Delta(1)-pyrroline-2-carboxylate (using NADH as cosubstrate)</KM>
        <text evidence="1">kcat is 260 sec(-1) for Pyr2C reduction using NADPH. kcat is 81 sec(-1) for Pyr2C reduction using NADH.</text>
    </kinetics>
</comment>
<comment type="similarity">
    <text evidence="3">Belongs to the ornithine cyclodeaminase/mu-crystallin family.</text>
</comment>
<sequence>MARKSSAPQFLSYGDATGRLSWRDAVEALRQGHTLPQAQIRDVFLGPPTGTMMSRSAWIEGLGYGAKTFTVFDGNAARGLPTVQGAMLVFDKDDGRLQAIVDSPLVTEFKTAADSVLGASLLARPDSRHLLIVGAGTVAASLVRAYTAVLPGIERVSVWARRPQQAQDLIEGLDGIEADLAAVSDLPAAVGQADIVSSATMARQPVILGAWVRPGTHVDLIGAFKADMREADDALMARAALFVDSRETTLGHIGELMLPIASGAITAESVLGDLYDLVRPGARRRQSEDEITVFKNGGGAHLDLMIASYIARVMAG</sequence>
<proteinExistence type="evidence at protein level"/>
<keyword id="KW-0520">NAD</keyword>
<keyword id="KW-0521">NADP</keyword>
<keyword id="KW-0560">Oxidoreductase</keyword>
<keyword id="KW-1185">Reference proteome</keyword>
<evidence type="ECO:0000269" key="1">
    <source>
    </source>
</evidence>
<evidence type="ECO:0000303" key="2">
    <source>
    </source>
</evidence>
<evidence type="ECO:0000305" key="3"/>
<evidence type="ECO:0000312" key="4">
    <source>
        <dbReference type="EMBL" id="ABL69290.1"/>
    </source>
</evidence>
<reference key="1">
    <citation type="submission" date="2006-12" db="EMBL/GenBank/DDBJ databases">
        <title>Complete sequence of chromosome 1 of Paracoccus denitrificans PD1222.</title>
        <authorList>
            <person name="Copeland A."/>
            <person name="Lucas S."/>
            <person name="Lapidus A."/>
            <person name="Barry K."/>
            <person name="Detter J.C."/>
            <person name="Glavina del Rio T."/>
            <person name="Hammon N."/>
            <person name="Israni S."/>
            <person name="Dalin E."/>
            <person name="Tice H."/>
            <person name="Pitluck S."/>
            <person name="Munk A.C."/>
            <person name="Brettin T."/>
            <person name="Bruce D."/>
            <person name="Han C."/>
            <person name="Tapia R."/>
            <person name="Gilna P."/>
            <person name="Schmutz J."/>
            <person name="Larimer F."/>
            <person name="Land M."/>
            <person name="Hauser L."/>
            <person name="Kyrpides N."/>
            <person name="Lykidis A."/>
            <person name="Spiro S."/>
            <person name="Richardson D.J."/>
            <person name="Moir J.W.B."/>
            <person name="Ferguson S.J."/>
            <person name="van Spanning R.J.M."/>
            <person name="Richardson P."/>
        </authorList>
    </citation>
    <scope>NUCLEOTIDE SEQUENCE [LARGE SCALE GENOMIC DNA]</scope>
    <source>
        <strain>Pd 1222</strain>
    </source>
</reference>
<reference key="2">
    <citation type="journal article" date="2014" name="Elife">
        <title>Prediction and characterization of enzymatic activities guided by sequence similarity and genome neighborhood networks.</title>
        <authorList>
            <person name="Zhao S."/>
            <person name="Sakai A."/>
            <person name="Zhang X."/>
            <person name="Vetting M.W."/>
            <person name="Kumar R."/>
            <person name="Hillerich B."/>
            <person name="San Francisco B."/>
            <person name="Solbiati J."/>
            <person name="Steves A."/>
            <person name="Brown S."/>
            <person name="Akiva E."/>
            <person name="Barber A."/>
            <person name="Seidel R.D."/>
            <person name="Babbitt P.C."/>
            <person name="Almo S.C."/>
            <person name="Gerlt J.A."/>
            <person name="Jacobson M.P."/>
        </authorList>
    </citation>
    <scope>FUNCTION</scope>
    <scope>CATALYTIC ACTIVITY</scope>
    <scope>BIOPHYSICOCHEMICAL PROPERTIES</scope>
    <source>
        <strain>Pd 1222</strain>
    </source>
</reference>
<name>PY2CR_PARDP</name>
<dbReference type="EC" id="1.5.1.49" evidence="1"/>
<dbReference type="EMBL" id="CP000489">
    <property type="protein sequence ID" value="ABL69290.1"/>
    <property type="molecule type" value="Genomic_DNA"/>
</dbReference>
<dbReference type="RefSeq" id="WP_011747510.1">
    <property type="nucleotide sequence ID" value="NC_008686.1"/>
</dbReference>
<dbReference type="SMR" id="A1B196"/>
<dbReference type="STRING" id="318586.Pden_1185"/>
<dbReference type="EnsemblBacteria" id="ABL69290">
    <property type="protein sequence ID" value="ABL69290"/>
    <property type="gene ID" value="Pden_1185"/>
</dbReference>
<dbReference type="GeneID" id="93452401"/>
<dbReference type="KEGG" id="pde:Pden_1185"/>
<dbReference type="eggNOG" id="COG2423">
    <property type="taxonomic scope" value="Bacteria"/>
</dbReference>
<dbReference type="HOGENOM" id="CLU_042088_1_2_5"/>
<dbReference type="OrthoDB" id="9785971at2"/>
<dbReference type="SABIO-RK" id="A1B196"/>
<dbReference type="Proteomes" id="UP000000361">
    <property type="component" value="Chromosome 1"/>
</dbReference>
<dbReference type="GO" id="GO:0005737">
    <property type="term" value="C:cytoplasm"/>
    <property type="evidence" value="ECO:0007669"/>
    <property type="project" value="TreeGrafter"/>
</dbReference>
<dbReference type="GO" id="GO:0016491">
    <property type="term" value="F:oxidoreductase activity"/>
    <property type="evidence" value="ECO:0007669"/>
    <property type="project" value="UniProtKB-KW"/>
</dbReference>
<dbReference type="FunFam" id="3.40.50.720:FF:000311">
    <property type="entry name" value="Ornithine cyclodeaminase"/>
    <property type="match status" value="1"/>
</dbReference>
<dbReference type="Gene3D" id="3.40.50.720">
    <property type="entry name" value="NAD(P)-binding Rossmann-like Domain"/>
    <property type="match status" value="1"/>
</dbReference>
<dbReference type="Gene3D" id="3.30.1780.10">
    <property type="entry name" value="ornithine cyclodeaminase, domain 1"/>
    <property type="match status" value="1"/>
</dbReference>
<dbReference type="InterPro" id="IPR036291">
    <property type="entry name" value="NAD(P)-bd_dom_sf"/>
</dbReference>
<dbReference type="InterPro" id="IPR003462">
    <property type="entry name" value="ODC_Mu_crystall"/>
</dbReference>
<dbReference type="InterPro" id="IPR023401">
    <property type="entry name" value="ODC_N"/>
</dbReference>
<dbReference type="PANTHER" id="PTHR13812">
    <property type="entry name" value="KETIMINE REDUCTASE MU-CRYSTALLIN"/>
    <property type="match status" value="1"/>
</dbReference>
<dbReference type="PANTHER" id="PTHR13812:SF19">
    <property type="entry name" value="KETIMINE REDUCTASE MU-CRYSTALLIN"/>
    <property type="match status" value="1"/>
</dbReference>
<dbReference type="Pfam" id="PF02423">
    <property type="entry name" value="OCD_Mu_crystall"/>
    <property type="match status" value="1"/>
</dbReference>
<dbReference type="PIRSF" id="PIRSF001439">
    <property type="entry name" value="CryM"/>
    <property type="match status" value="1"/>
</dbReference>
<dbReference type="SUPFAM" id="SSF51735">
    <property type="entry name" value="NAD(P)-binding Rossmann-fold domains"/>
    <property type="match status" value="1"/>
</dbReference>
<organism>
    <name type="scientific">Paracoccus denitrificans (strain Pd 1222)</name>
    <dbReference type="NCBI Taxonomy" id="318586"/>
    <lineage>
        <taxon>Bacteria</taxon>
        <taxon>Pseudomonadati</taxon>
        <taxon>Pseudomonadota</taxon>
        <taxon>Alphaproteobacteria</taxon>
        <taxon>Rhodobacterales</taxon>
        <taxon>Paracoccaceae</taxon>
        <taxon>Paracoccus</taxon>
    </lineage>
</organism>